<protein>
    <recommendedName>
        <fullName evidence="1">Octanoyltransferase</fullName>
        <ecNumber evidence="1">2.3.1.181</ecNumber>
    </recommendedName>
    <alternativeName>
        <fullName evidence="1">Lipoate-protein ligase B</fullName>
    </alternativeName>
    <alternativeName>
        <fullName evidence="1">Lipoyl/octanoyl transferase</fullName>
    </alternativeName>
    <alternativeName>
        <fullName evidence="1">Octanoyl-[acyl-carrier-protein]-protein N-octanoyltransferase</fullName>
    </alternativeName>
</protein>
<accession>Q7WR01</accession>
<proteinExistence type="inferred from homology"/>
<feature type="chain" id="PRO_0000062814" description="Octanoyltransferase">
    <location>
        <begin position="1"/>
        <end position="220"/>
    </location>
</feature>
<feature type="domain" description="BPL/LPL catalytic" evidence="2">
    <location>
        <begin position="27"/>
        <end position="208"/>
    </location>
</feature>
<feature type="active site" description="Acyl-thioester intermediate" evidence="1">
    <location>
        <position position="170"/>
    </location>
</feature>
<feature type="binding site" evidence="1">
    <location>
        <begin position="66"/>
        <end position="73"/>
    </location>
    <ligand>
        <name>substrate</name>
    </ligand>
</feature>
<feature type="binding site" evidence="1">
    <location>
        <begin position="139"/>
        <end position="141"/>
    </location>
    <ligand>
        <name>substrate</name>
    </ligand>
</feature>
<feature type="binding site" evidence="1">
    <location>
        <begin position="152"/>
        <end position="154"/>
    </location>
    <ligand>
        <name>substrate</name>
    </ligand>
</feature>
<feature type="site" description="Lowers pKa of active site Cys" evidence="1">
    <location>
        <position position="136"/>
    </location>
</feature>
<gene>
    <name evidence="1" type="primary">lipB</name>
    <name type="ordered locus">BB0171</name>
</gene>
<reference key="1">
    <citation type="journal article" date="2003" name="Nat. Genet.">
        <title>Comparative analysis of the genome sequences of Bordetella pertussis, Bordetella parapertussis and Bordetella bronchiseptica.</title>
        <authorList>
            <person name="Parkhill J."/>
            <person name="Sebaihia M."/>
            <person name="Preston A."/>
            <person name="Murphy L.D."/>
            <person name="Thomson N.R."/>
            <person name="Harris D.E."/>
            <person name="Holden M.T.G."/>
            <person name="Churcher C.M."/>
            <person name="Bentley S.D."/>
            <person name="Mungall K.L."/>
            <person name="Cerdeno-Tarraga A.-M."/>
            <person name="Temple L."/>
            <person name="James K.D."/>
            <person name="Harris B."/>
            <person name="Quail M.A."/>
            <person name="Achtman M."/>
            <person name="Atkin R."/>
            <person name="Baker S."/>
            <person name="Basham D."/>
            <person name="Bason N."/>
            <person name="Cherevach I."/>
            <person name="Chillingworth T."/>
            <person name="Collins M."/>
            <person name="Cronin A."/>
            <person name="Davis P."/>
            <person name="Doggett J."/>
            <person name="Feltwell T."/>
            <person name="Goble A."/>
            <person name="Hamlin N."/>
            <person name="Hauser H."/>
            <person name="Holroyd S."/>
            <person name="Jagels K."/>
            <person name="Leather S."/>
            <person name="Moule S."/>
            <person name="Norberczak H."/>
            <person name="O'Neil S."/>
            <person name="Ormond D."/>
            <person name="Price C."/>
            <person name="Rabbinowitsch E."/>
            <person name="Rutter S."/>
            <person name="Sanders M."/>
            <person name="Saunders D."/>
            <person name="Seeger K."/>
            <person name="Sharp S."/>
            <person name="Simmonds M."/>
            <person name="Skelton J."/>
            <person name="Squares R."/>
            <person name="Squares S."/>
            <person name="Stevens K."/>
            <person name="Unwin L."/>
            <person name="Whitehead S."/>
            <person name="Barrell B.G."/>
            <person name="Maskell D.J."/>
        </authorList>
    </citation>
    <scope>NUCLEOTIDE SEQUENCE [LARGE SCALE GENOMIC DNA]</scope>
    <source>
        <strain>ATCC BAA-588 / NCTC 13252 / RB50</strain>
    </source>
</reference>
<evidence type="ECO:0000255" key="1">
    <source>
        <dbReference type="HAMAP-Rule" id="MF_00013"/>
    </source>
</evidence>
<evidence type="ECO:0000255" key="2">
    <source>
        <dbReference type="PROSITE-ProRule" id="PRU01067"/>
    </source>
</evidence>
<name>LIPB_BORBR</name>
<dbReference type="EC" id="2.3.1.181" evidence="1"/>
<dbReference type="EMBL" id="BX640437">
    <property type="protein sequence ID" value="CAE30671.1"/>
    <property type="molecule type" value="Genomic_DNA"/>
</dbReference>
<dbReference type="RefSeq" id="WP_010925723.1">
    <property type="nucleotide sequence ID" value="NC_002927.3"/>
</dbReference>
<dbReference type="SMR" id="Q7WR01"/>
<dbReference type="KEGG" id="bbr:BB0171"/>
<dbReference type="eggNOG" id="COG0321">
    <property type="taxonomic scope" value="Bacteria"/>
</dbReference>
<dbReference type="HOGENOM" id="CLU_035168_3_1_4"/>
<dbReference type="UniPathway" id="UPA00538">
    <property type="reaction ID" value="UER00592"/>
</dbReference>
<dbReference type="Proteomes" id="UP000001027">
    <property type="component" value="Chromosome"/>
</dbReference>
<dbReference type="GO" id="GO:0005737">
    <property type="term" value="C:cytoplasm"/>
    <property type="evidence" value="ECO:0007669"/>
    <property type="project" value="UniProtKB-SubCell"/>
</dbReference>
<dbReference type="GO" id="GO:0033819">
    <property type="term" value="F:lipoyl(octanoyl) transferase activity"/>
    <property type="evidence" value="ECO:0007669"/>
    <property type="project" value="UniProtKB-EC"/>
</dbReference>
<dbReference type="GO" id="GO:0036211">
    <property type="term" value="P:protein modification process"/>
    <property type="evidence" value="ECO:0007669"/>
    <property type="project" value="InterPro"/>
</dbReference>
<dbReference type="CDD" id="cd16444">
    <property type="entry name" value="LipB"/>
    <property type="match status" value="1"/>
</dbReference>
<dbReference type="FunFam" id="3.30.930.10:FF:000020">
    <property type="entry name" value="Octanoyltransferase"/>
    <property type="match status" value="1"/>
</dbReference>
<dbReference type="Gene3D" id="3.30.930.10">
    <property type="entry name" value="Bira Bifunctional Protein, Domain 2"/>
    <property type="match status" value="1"/>
</dbReference>
<dbReference type="HAMAP" id="MF_00013">
    <property type="entry name" value="LipB"/>
    <property type="match status" value="1"/>
</dbReference>
<dbReference type="InterPro" id="IPR045864">
    <property type="entry name" value="aa-tRNA-synth_II/BPL/LPL"/>
</dbReference>
<dbReference type="InterPro" id="IPR004143">
    <property type="entry name" value="BPL_LPL_catalytic"/>
</dbReference>
<dbReference type="InterPro" id="IPR000544">
    <property type="entry name" value="Octanoyltransferase"/>
</dbReference>
<dbReference type="InterPro" id="IPR020605">
    <property type="entry name" value="Octanoyltransferase_CS"/>
</dbReference>
<dbReference type="NCBIfam" id="TIGR00214">
    <property type="entry name" value="lipB"/>
    <property type="match status" value="1"/>
</dbReference>
<dbReference type="NCBIfam" id="NF010922">
    <property type="entry name" value="PRK14342.1"/>
    <property type="match status" value="1"/>
</dbReference>
<dbReference type="PANTHER" id="PTHR10993:SF7">
    <property type="entry name" value="LIPOYLTRANSFERASE 2, MITOCHONDRIAL-RELATED"/>
    <property type="match status" value="1"/>
</dbReference>
<dbReference type="PANTHER" id="PTHR10993">
    <property type="entry name" value="OCTANOYLTRANSFERASE"/>
    <property type="match status" value="1"/>
</dbReference>
<dbReference type="Pfam" id="PF21948">
    <property type="entry name" value="LplA-B_cat"/>
    <property type="match status" value="1"/>
</dbReference>
<dbReference type="PIRSF" id="PIRSF016262">
    <property type="entry name" value="LPLase"/>
    <property type="match status" value="1"/>
</dbReference>
<dbReference type="SUPFAM" id="SSF55681">
    <property type="entry name" value="Class II aaRS and biotin synthetases"/>
    <property type="match status" value="1"/>
</dbReference>
<dbReference type="PROSITE" id="PS51733">
    <property type="entry name" value="BPL_LPL_CATALYTIC"/>
    <property type="match status" value="1"/>
</dbReference>
<dbReference type="PROSITE" id="PS01313">
    <property type="entry name" value="LIPB"/>
    <property type="match status" value="1"/>
</dbReference>
<keyword id="KW-0012">Acyltransferase</keyword>
<keyword id="KW-0963">Cytoplasm</keyword>
<keyword id="KW-0808">Transferase</keyword>
<sequence>MIKWLARPADYGSVWDAMKAFTAARGPGTADEIWLCEHAPVYTLGQAGRPEHLLNPGLIPVVHCDRGGQVTYHGPGQVLAYTLFDLRRAGLYVREYVDMLEQATLATLRELGLEQACRKPGAPGIYVPQPGGELAKIAALGVKVRNGYAYHGLALNIDMDLSPFLGINPCGYEGLRTVDLAACGVRTSVERAGELLAAQLARAHGQAVQQRAAALAGVPG</sequence>
<organism>
    <name type="scientific">Bordetella bronchiseptica (strain ATCC BAA-588 / NCTC 13252 / RB50)</name>
    <name type="common">Alcaligenes bronchisepticus</name>
    <dbReference type="NCBI Taxonomy" id="257310"/>
    <lineage>
        <taxon>Bacteria</taxon>
        <taxon>Pseudomonadati</taxon>
        <taxon>Pseudomonadota</taxon>
        <taxon>Betaproteobacteria</taxon>
        <taxon>Burkholderiales</taxon>
        <taxon>Alcaligenaceae</taxon>
        <taxon>Bordetella</taxon>
    </lineage>
</organism>
<comment type="function">
    <text evidence="1">Catalyzes the transfer of endogenously produced octanoic acid from octanoyl-acyl-carrier-protein onto the lipoyl domains of lipoate-dependent enzymes. Lipoyl-ACP can also act as a substrate although octanoyl-ACP is likely to be the physiological substrate.</text>
</comment>
<comment type="catalytic activity">
    <reaction evidence="1">
        <text>octanoyl-[ACP] + L-lysyl-[protein] = N(6)-octanoyl-L-lysyl-[protein] + holo-[ACP] + H(+)</text>
        <dbReference type="Rhea" id="RHEA:17665"/>
        <dbReference type="Rhea" id="RHEA-COMP:9636"/>
        <dbReference type="Rhea" id="RHEA-COMP:9685"/>
        <dbReference type="Rhea" id="RHEA-COMP:9752"/>
        <dbReference type="Rhea" id="RHEA-COMP:9928"/>
        <dbReference type="ChEBI" id="CHEBI:15378"/>
        <dbReference type="ChEBI" id="CHEBI:29969"/>
        <dbReference type="ChEBI" id="CHEBI:64479"/>
        <dbReference type="ChEBI" id="CHEBI:78463"/>
        <dbReference type="ChEBI" id="CHEBI:78809"/>
        <dbReference type="EC" id="2.3.1.181"/>
    </reaction>
</comment>
<comment type="pathway">
    <text evidence="1">Protein modification; protein lipoylation via endogenous pathway; protein N(6)-(lipoyl)lysine from octanoyl-[acyl-carrier-protein]: step 1/2.</text>
</comment>
<comment type="subcellular location">
    <subcellularLocation>
        <location evidence="1">Cytoplasm</location>
    </subcellularLocation>
</comment>
<comment type="miscellaneous">
    <text evidence="1">In the reaction, the free carboxyl group of octanoic acid is attached via an amide linkage to the epsilon-amino group of a specific lysine residue of lipoyl domains of lipoate-dependent enzymes.</text>
</comment>
<comment type="similarity">
    <text evidence="1">Belongs to the LipB family.</text>
</comment>